<comment type="function">
    <text evidence="1">Transfers the 4'-phosphopantetheine moiety from coenzyme A to a Ser of acyl-carrier-protein.</text>
</comment>
<comment type="catalytic activity">
    <reaction evidence="1">
        <text>apo-[ACP] + CoA = holo-[ACP] + adenosine 3',5'-bisphosphate + H(+)</text>
        <dbReference type="Rhea" id="RHEA:12068"/>
        <dbReference type="Rhea" id="RHEA-COMP:9685"/>
        <dbReference type="Rhea" id="RHEA-COMP:9690"/>
        <dbReference type="ChEBI" id="CHEBI:15378"/>
        <dbReference type="ChEBI" id="CHEBI:29999"/>
        <dbReference type="ChEBI" id="CHEBI:57287"/>
        <dbReference type="ChEBI" id="CHEBI:58343"/>
        <dbReference type="ChEBI" id="CHEBI:64479"/>
        <dbReference type="EC" id="2.7.8.7"/>
    </reaction>
</comment>
<comment type="cofactor">
    <cofactor evidence="1">
        <name>Mg(2+)</name>
        <dbReference type="ChEBI" id="CHEBI:18420"/>
    </cofactor>
</comment>
<comment type="subcellular location">
    <subcellularLocation>
        <location evidence="1">Cytoplasm</location>
    </subcellularLocation>
</comment>
<comment type="similarity">
    <text evidence="1">Belongs to the P-Pant transferase superfamily. AcpS family.</text>
</comment>
<proteinExistence type="inferred from homology"/>
<sequence length="137" mass="14974">MIIGIGNDLCNIERIQRSLDRFGERFEQRVFTPHEIAKARGRRRVAETYAKRFAAKEAMAKALGTGVPRAGVHWKHLGVINLPSGKPGFELTGGAAARLAKLTPPGHRAVVHLTLTDDHPWAEAQVIIEAIPVAEPS</sequence>
<name>ACPS_HYPNA</name>
<evidence type="ECO:0000255" key="1">
    <source>
        <dbReference type="HAMAP-Rule" id="MF_00101"/>
    </source>
</evidence>
<feature type="chain" id="PRO_1000008433" description="Holo-[acyl-carrier-protein] synthase">
    <location>
        <begin position="1"/>
        <end position="137"/>
    </location>
</feature>
<feature type="binding site" evidence="1">
    <location>
        <position position="8"/>
    </location>
    <ligand>
        <name>Mg(2+)</name>
        <dbReference type="ChEBI" id="CHEBI:18420"/>
    </ligand>
</feature>
<feature type="binding site" evidence="1">
    <location>
        <position position="57"/>
    </location>
    <ligand>
        <name>Mg(2+)</name>
        <dbReference type="ChEBI" id="CHEBI:18420"/>
    </ligand>
</feature>
<gene>
    <name evidence="1" type="primary">acpS</name>
    <name type="ordered locus">HNE_0876</name>
</gene>
<accession>Q0C3U0</accession>
<keyword id="KW-0963">Cytoplasm</keyword>
<keyword id="KW-0275">Fatty acid biosynthesis</keyword>
<keyword id="KW-0276">Fatty acid metabolism</keyword>
<keyword id="KW-0444">Lipid biosynthesis</keyword>
<keyword id="KW-0443">Lipid metabolism</keyword>
<keyword id="KW-0460">Magnesium</keyword>
<keyword id="KW-0479">Metal-binding</keyword>
<keyword id="KW-1185">Reference proteome</keyword>
<keyword id="KW-0808">Transferase</keyword>
<dbReference type="EC" id="2.7.8.7" evidence="1"/>
<dbReference type="EMBL" id="CP000158">
    <property type="protein sequence ID" value="ABI76326.1"/>
    <property type="molecule type" value="Genomic_DNA"/>
</dbReference>
<dbReference type="RefSeq" id="WP_011645903.1">
    <property type="nucleotide sequence ID" value="NC_008358.1"/>
</dbReference>
<dbReference type="SMR" id="Q0C3U0"/>
<dbReference type="STRING" id="228405.HNE_0876"/>
<dbReference type="KEGG" id="hne:HNE_0876"/>
<dbReference type="eggNOG" id="COG0736">
    <property type="taxonomic scope" value="Bacteria"/>
</dbReference>
<dbReference type="HOGENOM" id="CLU_089696_0_2_5"/>
<dbReference type="Proteomes" id="UP000001959">
    <property type="component" value="Chromosome"/>
</dbReference>
<dbReference type="GO" id="GO:0005737">
    <property type="term" value="C:cytoplasm"/>
    <property type="evidence" value="ECO:0007669"/>
    <property type="project" value="UniProtKB-SubCell"/>
</dbReference>
<dbReference type="GO" id="GO:0008897">
    <property type="term" value="F:holo-[acyl-carrier-protein] synthase activity"/>
    <property type="evidence" value="ECO:0007669"/>
    <property type="project" value="UniProtKB-UniRule"/>
</dbReference>
<dbReference type="GO" id="GO:0000287">
    <property type="term" value="F:magnesium ion binding"/>
    <property type="evidence" value="ECO:0007669"/>
    <property type="project" value="UniProtKB-UniRule"/>
</dbReference>
<dbReference type="GO" id="GO:0006633">
    <property type="term" value="P:fatty acid biosynthetic process"/>
    <property type="evidence" value="ECO:0007669"/>
    <property type="project" value="UniProtKB-UniRule"/>
</dbReference>
<dbReference type="Gene3D" id="3.90.470.20">
    <property type="entry name" value="4'-phosphopantetheinyl transferase domain"/>
    <property type="match status" value="1"/>
</dbReference>
<dbReference type="HAMAP" id="MF_00101">
    <property type="entry name" value="AcpS"/>
    <property type="match status" value="1"/>
</dbReference>
<dbReference type="InterPro" id="IPR008278">
    <property type="entry name" value="4-PPantetheinyl_Trfase_dom"/>
</dbReference>
<dbReference type="InterPro" id="IPR037143">
    <property type="entry name" value="4-PPantetheinyl_Trfase_dom_sf"/>
</dbReference>
<dbReference type="InterPro" id="IPR002582">
    <property type="entry name" value="ACPS"/>
</dbReference>
<dbReference type="InterPro" id="IPR004568">
    <property type="entry name" value="Ppantetheine-prot_Trfase_dom"/>
</dbReference>
<dbReference type="NCBIfam" id="TIGR00516">
    <property type="entry name" value="acpS"/>
    <property type="match status" value="1"/>
</dbReference>
<dbReference type="NCBIfam" id="TIGR00556">
    <property type="entry name" value="pantethn_trn"/>
    <property type="match status" value="1"/>
</dbReference>
<dbReference type="Pfam" id="PF01648">
    <property type="entry name" value="ACPS"/>
    <property type="match status" value="1"/>
</dbReference>
<dbReference type="SUPFAM" id="SSF56214">
    <property type="entry name" value="4'-phosphopantetheinyl transferase"/>
    <property type="match status" value="1"/>
</dbReference>
<reference key="1">
    <citation type="journal article" date="2006" name="J. Bacteriol.">
        <title>Comparative genomic evidence for a close relationship between the dimorphic prosthecate bacteria Hyphomonas neptunium and Caulobacter crescentus.</title>
        <authorList>
            <person name="Badger J.H."/>
            <person name="Hoover T.R."/>
            <person name="Brun Y.V."/>
            <person name="Weiner R.M."/>
            <person name="Laub M.T."/>
            <person name="Alexandre G."/>
            <person name="Mrazek J."/>
            <person name="Ren Q."/>
            <person name="Paulsen I.T."/>
            <person name="Nelson K.E."/>
            <person name="Khouri H.M."/>
            <person name="Radune D."/>
            <person name="Sosa J."/>
            <person name="Dodson R.J."/>
            <person name="Sullivan S.A."/>
            <person name="Rosovitz M.J."/>
            <person name="Madupu R."/>
            <person name="Brinkac L.M."/>
            <person name="Durkin A.S."/>
            <person name="Daugherty S.C."/>
            <person name="Kothari S.P."/>
            <person name="Giglio M.G."/>
            <person name="Zhou L."/>
            <person name="Haft D.H."/>
            <person name="Selengut J.D."/>
            <person name="Davidsen T.M."/>
            <person name="Yang Q."/>
            <person name="Zafar N."/>
            <person name="Ward N.L."/>
        </authorList>
    </citation>
    <scope>NUCLEOTIDE SEQUENCE [LARGE SCALE GENOMIC DNA]</scope>
    <source>
        <strain>ATCC 15444</strain>
    </source>
</reference>
<protein>
    <recommendedName>
        <fullName evidence="1">Holo-[acyl-carrier-protein] synthase</fullName>
        <shortName evidence="1">Holo-ACP synthase</shortName>
        <ecNumber evidence="1">2.7.8.7</ecNumber>
    </recommendedName>
    <alternativeName>
        <fullName evidence="1">4'-phosphopantetheinyl transferase AcpS</fullName>
    </alternativeName>
</protein>
<organism>
    <name type="scientific">Hyphomonas neptunium (strain ATCC 15444)</name>
    <dbReference type="NCBI Taxonomy" id="228405"/>
    <lineage>
        <taxon>Bacteria</taxon>
        <taxon>Pseudomonadati</taxon>
        <taxon>Pseudomonadota</taxon>
        <taxon>Alphaproteobacteria</taxon>
        <taxon>Hyphomonadales</taxon>
        <taxon>Hyphomonadaceae</taxon>
        <taxon>Hyphomonas</taxon>
    </lineage>
</organism>